<sequence>MAGDGRRAEAVREGWGVYVTPRAPIREGRGRLAPQNGGSSDAPAYRTPPSRQGRREVRFSDEPPEVYGDFEPLVAKERSPVGKRTRLEEFRSDSAKEEVRESAYYLRSRQRRQPRPQETEEMKTRRTTRLQQQHSEQPPLQPSPVMTRRGLRDSHSSEEDEASSQTDLSQTISKKTVRSIQEAPVSEDLVIRLRRPPLRYPRYEATSVQQKVNFSEEGETEEDDQDSSHSSVTTVKARSRDSDESGDKTTRSSSQYIESFWQSSQSQNFTAHDKQPSVLSSGYQKTPQEWAPQTARIRTRMQNDSILKSELGNQSPSTSSRQVTGQPQNASFVKRNRWWLLPLIAALASGSFWFFSTPEVETTAVQEFQNQMNQLKNKYQGQDEKLWKRSQTFLEKHLNSSHPRSQPAILLLTAARDAEEALRCLSEQIADAYSSFRSVRAIRIDGTDKATQDSDTVKLEVDQELSNGFKNGQNAAVVHRFESFPAGSTLIFYKYCDHENAAFKDVALVLTVLLEEETLGTSLGLKEVEEKVRDFLKVKFTNSNTPNSYNHMDPDKLNGLWSRISHLVLPVQPENALKRGICL</sequence>
<name>TOIP1_HUMAN</name>
<proteinExistence type="evidence at protein level"/>
<reference key="1">
    <citation type="journal article" date="2004" name="Nat. Genet.">
        <title>Complete sequencing and characterization of 21,243 full-length human cDNAs.</title>
        <authorList>
            <person name="Ota T."/>
            <person name="Suzuki Y."/>
            <person name="Nishikawa T."/>
            <person name="Otsuki T."/>
            <person name="Sugiyama T."/>
            <person name="Irie R."/>
            <person name="Wakamatsu A."/>
            <person name="Hayashi K."/>
            <person name="Sato H."/>
            <person name="Nagai K."/>
            <person name="Kimura K."/>
            <person name="Makita H."/>
            <person name="Sekine M."/>
            <person name="Obayashi M."/>
            <person name="Nishi T."/>
            <person name="Shibahara T."/>
            <person name="Tanaka T."/>
            <person name="Ishii S."/>
            <person name="Yamamoto J."/>
            <person name="Saito K."/>
            <person name="Kawai Y."/>
            <person name="Isono Y."/>
            <person name="Nakamura Y."/>
            <person name="Nagahari K."/>
            <person name="Murakami K."/>
            <person name="Yasuda T."/>
            <person name="Iwayanagi T."/>
            <person name="Wagatsuma M."/>
            <person name="Shiratori A."/>
            <person name="Sudo H."/>
            <person name="Hosoiri T."/>
            <person name="Kaku Y."/>
            <person name="Kodaira H."/>
            <person name="Kondo H."/>
            <person name="Sugawara M."/>
            <person name="Takahashi M."/>
            <person name="Kanda K."/>
            <person name="Yokoi T."/>
            <person name="Furuya T."/>
            <person name="Kikkawa E."/>
            <person name="Omura Y."/>
            <person name="Abe K."/>
            <person name="Kamihara K."/>
            <person name="Katsuta N."/>
            <person name="Sato K."/>
            <person name="Tanikawa M."/>
            <person name="Yamazaki M."/>
            <person name="Ninomiya K."/>
            <person name="Ishibashi T."/>
            <person name="Yamashita H."/>
            <person name="Murakawa K."/>
            <person name="Fujimori K."/>
            <person name="Tanai H."/>
            <person name="Kimata M."/>
            <person name="Watanabe M."/>
            <person name="Hiraoka S."/>
            <person name="Chiba Y."/>
            <person name="Ishida S."/>
            <person name="Ono Y."/>
            <person name="Takiguchi S."/>
            <person name="Watanabe S."/>
            <person name="Yosida M."/>
            <person name="Hotuta T."/>
            <person name="Kusano J."/>
            <person name="Kanehori K."/>
            <person name="Takahashi-Fujii A."/>
            <person name="Hara H."/>
            <person name="Tanase T.-O."/>
            <person name="Nomura Y."/>
            <person name="Togiya S."/>
            <person name="Komai F."/>
            <person name="Hara R."/>
            <person name="Takeuchi K."/>
            <person name="Arita M."/>
            <person name="Imose N."/>
            <person name="Musashino K."/>
            <person name="Yuuki H."/>
            <person name="Oshima A."/>
            <person name="Sasaki N."/>
            <person name="Aotsuka S."/>
            <person name="Yoshikawa Y."/>
            <person name="Matsunawa H."/>
            <person name="Ichihara T."/>
            <person name="Shiohata N."/>
            <person name="Sano S."/>
            <person name="Moriya S."/>
            <person name="Momiyama H."/>
            <person name="Satoh N."/>
            <person name="Takami S."/>
            <person name="Terashima Y."/>
            <person name="Suzuki O."/>
            <person name="Nakagawa S."/>
            <person name="Senoh A."/>
            <person name="Mizoguchi H."/>
            <person name="Goto Y."/>
            <person name="Shimizu F."/>
            <person name="Wakebe H."/>
            <person name="Hishigaki H."/>
            <person name="Watanabe T."/>
            <person name="Sugiyama A."/>
            <person name="Takemoto M."/>
            <person name="Kawakami B."/>
            <person name="Yamazaki M."/>
            <person name="Watanabe K."/>
            <person name="Kumagai A."/>
            <person name="Itakura S."/>
            <person name="Fukuzumi Y."/>
            <person name="Fujimori Y."/>
            <person name="Komiyama M."/>
            <person name="Tashiro H."/>
            <person name="Tanigami A."/>
            <person name="Fujiwara T."/>
            <person name="Ono T."/>
            <person name="Yamada K."/>
            <person name="Fujii Y."/>
            <person name="Ozaki K."/>
            <person name="Hirao M."/>
            <person name="Ohmori Y."/>
            <person name="Kawabata A."/>
            <person name="Hikiji T."/>
            <person name="Kobatake N."/>
            <person name="Inagaki H."/>
            <person name="Ikema Y."/>
            <person name="Okamoto S."/>
            <person name="Okitani R."/>
            <person name="Kawakami T."/>
            <person name="Noguchi S."/>
            <person name="Itoh T."/>
            <person name="Shigeta K."/>
            <person name="Senba T."/>
            <person name="Matsumura K."/>
            <person name="Nakajima Y."/>
            <person name="Mizuno T."/>
            <person name="Morinaga M."/>
            <person name="Sasaki M."/>
            <person name="Togashi T."/>
            <person name="Oyama M."/>
            <person name="Hata H."/>
            <person name="Watanabe M."/>
            <person name="Komatsu T."/>
            <person name="Mizushima-Sugano J."/>
            <person name="Satoh T."/>
            <person name="Shirai Y."/>
            <person name="Takahashi Y."/>
            <person name="Nakagawa K."/>
            <person name="Okumura K."/>
            <person name="Nagase T."/>
            <person name="Nomura N."/>
            <person name="Kikuchi H."/>
            <person name="Masuho Y."/>
            <person name="Yamashita R."/>
            <person name="Nakai K."/>
            <person name="Yada T."/>
            <person name="Nakamura Y."/>
            <person name="Ohara O."/>
            <person name="Isogai T."/>
            <person name="Sugano S."/>
        </authorList>
    </citation>
    <scope>NUCLEOTIDE SEQUENCE [LARGE SCALE MRNA] (ISOFORMS 2 AND 4)</scope>
    <scope>VARIANTS THR-146 AND ARG-276</scope>
    <source>
        <tissue>Embryo</tissue>
        <tissue>Ovarian carcinoma</tissue>
        <tissue>Peripheral blood</tissue>
    </source>
</reference>
<reference key="2">
    <citation type="journal article" date="2006" name="Nature">
        <title>The DNA sequence and biological annotation of human chromosome 1.</title>
        <authorList>
            <person name="Gregory S.G."/>
            <person name="Barlow K.F."/>
            <person name="McLay K.E."/>
            <person name="Kaul R."/>
            <person name="Swarbreck D."/>
            <person name="Dunham A."/>
            <person name="Scott C.E."/>
            <person name="Howe K.L."/>
            <person name="Woodfine K."/>
            <person name="Spencer C.C.A."/>
            <person name="Jones M.C."/>
            <person name="Gillson C."/>
            <person name="Searle S."/>
            <person name="Zhou Y."/>
            <person name="Kokocinski F."/>
            <person name="McDonald L."/>
            <person name="Evans R."/>
            <person name="Phillips K."/>
            <person name="Atkinson A."/>
            <person name="Cooper R."/>
            <person name="Jones C."/>
            <person name="Hall R.E."/>
            <person name="Andrews T.D."/>
            <person name="Lloyd C."/>
            <person name="Ainscough R."/>
            <person name="Almeida J.P."/>
            <person name="Ambrose K.D."/>
            <person name="Anderson F."/>
            <person name="Andrew R.W."/>
            <person name="Ashwell R.I.S."/>
            <person name="Aubin K."/>
            <person name="Babbage A.K."/>
            <person name="Bagguley C.L."/>
            <person name="Bailey J."/>
            <person name="Beasley H."/>
            <person name="Bethel G."/>
            <person name="Bird C.P."/>
            <person name="Bray-Allen S."/>
            <person name="Brown J.Y."/>
            <person name="Brown A.J."/>
            <person name="Buckley D."/>
            <person name="Burton J."/>
            <person name="Bye J."/>
            <person name="Carder C."/>
            <person name="Chapman J.C."/>
            <person name="Clark S.Y."/>
            <person name="Clarke G."/>
            <person name="Clee C."/>
            <person name="Cobley V."/>
            <person name="Collier R.E."/>
            <person name="Corby N."/>
            <person name="Coville G.J."/>
            <person name="Davies J."/>
            <person name="Deadman R."/>
            <person name="Dunn M."/>
            <person name="Earthrowl M."/>
            <person name="Ellington A.G."/>
            <person name="Errington H."/>
            <person name="Frankish A."/>
            <person name="Frankland J."/>
            <person name="French L."/>
            <person name="Garner P."/>
            <person name="Garnett J."/>
            <person name="Gay L."/>
            <person name="Ghori M.R.J."/>
            <person name="Gibson R."/>
            <person name="Gilby L.M."/>
            <person name="Gillett W."/>
            <person name="Glithero R.J."/>
            <person name="Grafham D.V."/>
            <person name="Griffiths C."/>
            <person name="Griffiths-Jones S."/>
            <person name="Grocock R."/>
            <person name="Hammond S."/>
            <person name="Harrison E.S.I."/>
            <person name="Hart E."/>
            <person name="Haugen E."/>
            <person name="Heath P.D."/>
            <person name="Holmes S."/>
            <person name="Holt K."/>
            <person name="Howden P.J."/>
            <person name="Hunt A.R."/>
            <person name="Hunt S.E."/>
            <person name="Hunter G."/>
            <person name="Isherwood J."/>
            <person name="James R."/>
            <person name="Johnson C."/>
            <person name="Johnson D."/>
            <person name="Joy A."/>
            <person name="Kay M."/>
            <person name="Kershaw J.K."/>
            <person name="Kibukawa M."/>
            <person name="Kimberley A.M."/>
            <person name="King A."/>
            <person name="Knights A.J."/>
            <person name="Lad H."/>
            <person name="Laird G."/>
            <person name="Lawlor S."/>
            <person name="Leongamornlert D.A."/>
            <person name="Lloyd D.M."/>
            <person name="Loveland J."/>
            <person name="Lovell J."/>
            <person name="Lush M.J."/>
            <person name="Lyne R."/>
            <person name="Martin S."/>
            <person name="Mashreghi-Mohammadi M."/>
            <person name="Matthews L."/>
            <person name="Matthews N.S.W."/>
            <person name="McLaren S."/>
            <person name="Milne S."/>
            <person name="Mistry S."/>
            <person name="Moore M.J.F."/>
            <person name="Nickerson T."/>
            <person name="O'Dell C.N."/>
            <person name="Oliver K."/>
            <person name="Palmeiri A."/>
            <person name="Palmer S.A."/>
            <person name="Parker A."/>
            <person name="Patel D."/>
            <person name="Pearce A.V."/>
            <person name="Peck A.I."/>
            <person name="Pelan S."/>
            <person name="Phelps K."/>
            <person name="Phillimore B.J."/>
            <person name="Plumb R."/>
            <person name="Rajan J."/>
            <person name="Raymond C."/>
            <person name="Rouse G."/>
            <person name="Saenphimmachak C."/>
            <person name="Sehra H.K."/>
            <person name="Sheridan E."/>
            <person name="Shownkeen R."/>
            <person name="Sims S."/>
            <person name="Skuce C.D."/>
            <person name="Smith M."/>
            <person name="Steward C."/>
            <person name="Subramanian S."/>
            <person name="Sycamore N."/>
            <person name="Tracey A."/>
            <person name="Tromans A."/>
            <person name="Van Helmond Z."/>
            <person name="Wall M."/>
            <person name="Wallis J.M."/>
            <person name="White S."/>
            <person name="Whitehead S.L."/>
            <person name="Wilkinson J.E."/>
            <person name="Willey D.L."/>
            <person name="Williams H."/>
            <person name="Wilming L."/>
            <person name="Wray P.W."/>
            <person name="Wu Z."/>
            <person name="Coulson A."/>
            <person name="Vaudin M."/>
            <person name="Sulston J.E."/>
            <person name="Durbin R.M."/>
            <person name="Hubbard T."/>
            <person name="Wooster R."/>
            <person name="Dunham I."/>
            <person name="Carter N.P."/>
            <person name="McVean G."/>
            <person name="Ross M.T."/>
            <person name="Harrow J."/>
            <person name="Olson M.V."/>
            <person name="Beck S."/>
            <person name="Rogers J."/>
            <person name="Bentley D.R."/>
        </authorList>
    </citation>
    <scope>NUCLEOTIDE SEQUENCE [LARGE SCALE GENOMIC DNA]</scope>
</reference>
<reference key="3">
    <citation type="journal article" date="2004" name="Genome Res.">
        <title>The status, quality, and expansion of the NIH full-length cDNA project: the Mammalian Gene Collection (MGC).</title>
        <authorList>
            <consortium name="The MGC Project Team"/>
        </authorList>
    </citation>
    <scope>NUCLEOTIDE SEQUENCE [LARGE SCALE MRNA] (ISOFORM 4)</scope>
    <scope>VARIANTS THR-146 AND ARG-276</scope>
    <source>
        <tissue>Cervix</tissue>
    </source>
</reference>
<reference key="4">
    <citation type="journal article" date="2007" name="BMC Genomics">
        <title>The full-ORF clone resource of the German cDNA consortium.</title>
        <authorList>
            <person name="Bechtel S."/>
            <person name="Rosenfelder H."/>
            <person name="Duda A."/>
            <person name="Schmidt C.P."/>
            <person name="Ernst U."/>
            <person name="Wellenreuther R."/>
            <person name="Mehrle A."/>
            <person name="Schuster C."/>
            <person name="Bahr A."/>
            <person name="Bloecker H."/>
            <person name="Heubner D."/>
            <person name="Hoerlein A."/>
            <person name="Michel G."/>
            <person name="Wedler H."/>
            <person name="Koehrer K."/>
            <person name="Ottenwaelder B."/>
            <person name="Poustka A."/>
            <person name="Wiemann S."/>
            <person name="Schupp I."/>
        </authorList>
    </citation>
    <scope>NUCLEOTIDE SEQUENCE [LARGE SCALE MRNA] OF 404-583</scope>
    <source>
        <tissue>Uterus</tissue>
    </source>
</reference>
<reference key="5">
    <citation type="journal article" date="2002" name="Biochem. Biophys. Res. Commun.">
        <title>Molecular cloning of one isotype of human lamina-associated polypeptide 1s and a topological analysis using its deletion mutants.</title>
        <authorList>
            <person name="Kondo Y."/>
            <person name="Kondoh J."/>
            <person name="Hayashi D."/>
            <person name="Ban T."/>
            <person name="Takagi M."/>
            <person name="Kamei Y."/>
            <person name="Tsuji L."/>
            <person name="Kim J."/>
            <person name="Yoneda Y."/>
        </authorList>
    </citation>
    <scope>TOPOLOGY</scope>
    <scope>SUBCELLULAR LOCATION</scope>
</reference>
<reference key="6">
    <citation type="journal article" date="2005" name="J. Cell Biol.">
        <title>The AAA+ protein torsinA interacts with a conserved domain present in LAP1 and a novel ER protein.</title>
        <authorList>
            <person name="Goodchild R.E."/>
            <person name="Dauer W.T."/>
        </authorList>
    </citation>
    <scope>INTERACTION WITH TOR1A</scope>
</reference>
<reference key="7">
    <citation type="journal article" date="2006" name="Cell">
        <title>Global, in vivo, and site-specific phosphorylation dynamics in signaling networks.</title>
        <authorList>
            <person name="Olsen J.V."/>
            <person name="Blagoev B."/>
            <person name="Gnad F."/>
            <person name="Macek B."/>
            <person name="Kumar C."/>
            <person name="Mortensen P."/>
            <person name="Mann M."/>
        </authorList>
    </citation>
    <scope>PHOSPHORYLATION [LARGE SCALE ANALYSIS] AT SER-143 AND THR-220</scope>
    <scope>IDENTIFICATION BY MASS SPECTROMETRY [LARGE SCALE ANALYSIS]</scope>
    <source>
        <tissue>Cervix carcinoma</tissue>
    </source>
</reference>
<reference key="8">
    <citation type="journal article" date="2006" name="Neurobiol. Dis.">
        <title>Dystonia-causing mutant torsinA inhibits cell adhesion and neurite extension through interference with cytoskeletal dynamics.</title>
        <authorList>
            <person name="Hewett J.W."/>
            <person name="Zeng J."/>
            <person name="Niland B.P."/>
            <person name="Bragg D.C."/>
            <person name="Breakefield X.O."/>
        </authorList>
    </citation>
    <scope>INTERACTION WITH VIM</scope>
</reference>
<reference key="9">
    <citation type="journal article" date="2007" name="Science">
        <title>ATM and ATR substrate analysis reveals extensive protein networks responsive to DNA damage.</title>
        <authorList>
            <person name="Matsuoka S."/>
            <person name="Ballif B.A."/>
            <person name="Smogorzewska A."/>
            <person name="McDonald E.R. III"/>
            <person name="Hurov K.E."/>
            <person name="Luo J."/>
            <person name="Bakalarski C.E."/>
            <person name="Zhao Z."/>
            <person name="Solimini N."/>
            <person name="Lerenthal Y."/>
            <person name="Shiloh Y."/>
            <person name="Gygi S.P."/>
            <person name="Elledge S.J."/>
        </authorList>
    </citation>
    <scope>IDENTIFICATION BY MASS SPECTROMETRY [LARGE SCALE ANALYSIS]</scope>
    <source>
        <tissue>Embryonic kidney</tissue>
    </source>
</reference>
<reference key="10">
    <citation type="journal article" date="2008" name="Mol. Cell">
        <title>Kinase-selective enrichment enables quantitative phosphoproteomics of the kinome across the cell cycle.</title>
        <authorList>
            <person name="Daub H."/>
            <person name="Olsen J.V."/>
            <person name="Bairlein M."/>
            <person name="Gnad F."/>
            <person name="Oppermann F.S."/>
            <person name="Korner R."/>
            <person name="Greff Z."/>
            <person name="Keri G."/>
            <person name="Stemmann O."/>
            <person name="Mann M."/>
        </authorList>
    </citation>
    <scope>IDENTIFICATION BY MASS SPECTROMETRY [LARGE SCALE ANALYSIS]</scope>
    <source>
        <tissue>Cervix carcinoma</tissue>
    </source>
</reference>
<reference key="11">
    <citation type="journal article" date="2008" name="Proc. Natl. Acad. Sci. U.S.A.">
        <title>A quantitative atlas of mitotic phosphorylation.</title>
        <authorList>
            <person name="Dephoure N."/>
            <person name="Zhou C."/>
            <person name="Villen J."/>
            <person name="Beausoleil S.A."/>
            <person name="Bakalarski C.E."/>
            <person name="Elledge S.J."/>
            <person name="Gygi S.P."/>
        </authorList>
    </citation>
    <scope>PHOSPHORYLATION [LARGE SCALE ANALYSIS] AT SER-135; SER-143; SER-154; SER-156; SER-157; SER-186; SER-215; THR-220; SER-305 AND SER-315</scope>
    <scope>IDENTIFICATION BY MASS SPECTROMETRY [LARGE SCALE ANALYSIS]</scope>
    <source>
        <tissue>Cervix carcinoma</tissue>
    </source>
</reference>
<reference key="12">
    <citation type="journal article" date="2009" name="Anal. Chem.">
        <title>Lys-N and trypsin cover complementary parts of the phosphoproteome in a refined SCX-based approach.</title>
        <authorList>
            <person name="Gauci S."/>
            <person name="Helbig A.O."/>
            <person name="Slijper M."/>
            <person name="Krijgsveld J."/>
            <person name="Heck A.J."/>
            <person name="Mohammed S."/>
        </authorList>
    </citation>
    <scope>IDENTIFICATION BY MASS SPECTROMETRY [LARGE SCALE ANALYSIS]</scope>
</reference>
<reference key="13">
    <citation type="journal article" date="2009" name="J. Proteome Res.">
        <title>Glycoproteomics analysis of human liver tissue by combination of multiple enzyme digestion and hydrazide chemistry.</title>
        <authorList>
            <person name="Chen R."/>
            <person name="Jiang X."/>
            <person name="Sun D."/>
            <person name="Han G."/>
            <person name="Wang F."/>
            <person name="Ye M."/>
            <person name="Wang L."/>
            <person name="Zou H."/>
        </authorList>
    </citation>
    <scope>GLYCOSYLATION [LARGE SCALE ANALYSIS] AT ASN-399</scope>
    <source>
        <tissue>Liver</tissue>
    </source>
</reference>
<reference key="14">
    <citation type="journal article" date="2009" name="Sci. Signal.">
        <title>Quantitative phosphoproteomic analysis of T cell receptor signaling reveals system-wide modulation of protein-protein interactions.</title>
        <authorList>
            <person name="Mayya V."/>
            <person name="Lundgren D.H."/>
            <person name="Hwang S.-I."/>
            <person name="Rezaul K."/>
            <person name="Wu L."/>
            <person name="Eng J.K."/>
            <person name="Rodionov V."/>
            <person name="Han D.K."/>
        </authorList>
    </citation>
    <scope>PHOSPHORYLATION [LARGE SCALE ANALYSIS] AT SER-154; SER-156; SER-157; THR-220; SER-227 AND SER-305</scope>
    <scope>IDENTIFICATION BY MASS SPECTROMETRY [LARGE SCALE ANALYSIS]</scope>
    <source>
        <tissue>Leukemic T-cell</tissue>
    </source>
</reference>
<reference key="15">
    <citation type="journal article" date="2010" name="Sci. Signal.">
        <title>Quantitative phosphoproteomics reveals widespread full phosphorylation site occupancy during mitosis.</title>
        <authorList>
            <person name="Olsen J.V."/>
            <person name="Vermeulen M."/>
            <person name="Santamaria A."/>
            <person name="Kumar C."/>
            <person name="Miller M.L."/>
            <person name="Jensen L.J."/>
            <person name="Gnad F."/>
            <person name="Cox J."/>
            <person name="Jensen T.S."/>
            <person name="Nigg E.A."/>
            <person name="Brunak S."/>
            <person name="Mann M."/>
        </authorList>
    </citation>
    <scope>PHOSPHORYLATION [LARGE SCALE ANALYSIS] AT SER-143; THR-220 AND SER-315</scope>
    <scope>VARIANT [LARGE SCALE ANALYSIS] THR-146</scope>
    <scope>IDENTIFICATION BY MASS SPECTROMETRY [LARGE SCALE ANALYSIS]</scope>
    <source>
        <tissue>Cervix carcinoma</tissue>
    </source>
</reference>
<reference key="16">
    <citation type="journal article" date="2011" name="BMC Syst. Biol.">
        <title>Initial characterization of the human central proteome.</title>
        <authorList>
            <person name="Burkard T.R."/>
            <person name="Planyavsky M."/>
            <person name="Kaupe I."/>
            <person name="Breitwieser F.P."/>
            <person name="Buerckstuemmer T."/>
            <person name="Bennett K.L."/>
            <person name="Superti-Furga G."/>
            <person name="Colinge J."/>
        </authorList>
    </citation>
    <scope>IDENTIFICATION BY MASS SPECTROMETRY [LARGE SCALE ANALYSIS]</scope>
</reference>
<reference key="17">
    <citation type="journal article" date="2011" name="Sci. Signal.">
        <title>System-wide temporal characterization of the proteome and phosphoproteome of human embryonic stem cell differentiation.</title>
        <authorList>
            <person name="Rigbolt K.T."/>
            <person name="Prokhorova T.A."/>
            <person name="Akimov V."/>
            <person name="Henningsen J."/>
            <person name="Johansen P.T."/>
            <person name="Kratchmarova I."/>
            <person name="Kassem M."/>
            <person name="Mann M."/>
            <person name="Olsen J.V."/>
            <person name="Blagoev B."/>
        </authorList>
    </citation>
    <scope>PHOSPHORYLATION [LARGE SCALE ANALYSIS] AT SER-143</scope>
    <scope>VARIANT [LARGE SCALE ANALYSIS] THR-146</scope>
    <scope>IDENTIFICATION BY MASS SPECTROMETRY [LARGE SCALE ANALYSIS]</scope>
</reference>
<reference key="18">
    <citation type="journal article" date="2013" name="J. Proteome Res.">
        <title>Toward a comprehensive characterization of a human cancer cell phosphoproteome.</title>
        <authorList>
            <person name="Zhou H."/>
            <person name="Di Palma S."/>
            <person name="Preisinger C."/>
            <person name="Peng M."/>
            <person name="Polat A.N."/>
            <person name="Heck A.J."/>
            <person name="Mohammed S."/>
        </authorList>
    </citation>
    <scope>PHOSPHORYLATION [LARGE SCALE ANALYSIS] AT SER-143; SER-154; SER-156; SER-157; SER-186; SER-215; THR-220 AND SER-315</scope>
    <scope>IDENTIFICATION BY MASS SPECTROMETRY [LARGE SCALE ANALYSIS]</scope>
    <source>
        <tissue>Cervix carcinoma</tissue>
        <tissue>Erythroleukemia</tissue>
    </source>
</reference>
<reference key="19">
    <citation type="journal article" date="2013" name="Proc. Natl. Acad. Sci. U.S.A.">
        <title>Regulation of Torsin ATPases by LAP1 and LULL1.</title>
        <authorList>
            <person name="Zhao C."/>
            <person name="Brown R.S."/>
            <person name="Chase A.R."/>
            <person name="Eisele M.R."/>
            <person name="Schlieker C."/>
        </authorList>
    </citation>
    <scope>FUNCTION AS ATPASE ACTIVATOR</scope>
    <scope>INTERACTION WITH TOR1A</scope>
</reference>
<reference key="20">
    <citation type="journal article" date="2014" name="J. Biol. Chem.">
        <title>Arresting a Torsin ATPase reshapes the endoplasmic reticulum.</title>
        <authorList>
            <person name="Rose A.E."/>
            <person name="Zhao C."/>
            <person name="Turner E.M."/>
            <person name="Steyer A.M."/>
            <person name="Schlieker C."/>
        </authorList>
    </citation>
    <scope>SUBCELLULAR LOCATION</scope>
</reference>
<reference key="21">
    <citation type="journal article" date="2014" name="J. Proteomics">
        <title>An enzyme assisted RP-RPLC approach for in-depth analysis of human liver phosphoproteome.</title>
        <authorList>
            <person name="Bian Y."/>
            <person name="Song C."/>
            <person name="Cheng K."/>
            <person name="Dong M."/>
            <person name="Wang F."/>
            <person name="Huang J."/>
            <person name="Sun D."/>
            <person name="Wang L."/>
            <person name="Ye M."/>
            <person name="Zou H."/>
        </authorList>
    </citation>
    <scope>PHOSPHORYLATION [LARGE SCALE ANALYSIS] AT SER-143; SER-154; SER-156; SER-157; SER-215 AND THR-220</scope>
    <scope>IDENTIFICATION BY MASS SPECTROMETRY [LARGE SCALE ANALYSIS]</scope>
    <source>
        <tissue>Liver</tissue>
    </source>
</reference>
<reference key="22">
    <citation type="journal article" date="2014" name="PLoS ONE">
        <title>Identification of a novel human LAP1 isoform that is regulated by protein phosphorylation.</title>
        <authorList>
            <person name="Santos M."/>
            <person name="Domingues S.C."/>
            <person name="Costa P."/>
            <person name="Muller T."/>
            <person name="Galozzi S."/>
            <person name="Marcus K."/>
            <person name="da Cruz e Silva E.F."/>
            <person name="da Cruz e Silva O.A."/>
            <person name="Rebelo S."/>
        </authorList>
    </citation>
    <scope>ALTERNATIVE PROMOTER USAGE (ISOFORM 4)</scope>
    <scope>SUBCELLULAR LOCATION (ISOFORM 4)</scope>
    <scope>TISSUE SPECIFICITY (ISOFORMS 1 AND 4)</scope>
    <scope>DEVELOPMENTAL STAGE (ISOFORMS 1 AND 4)</scope>
    <scope>PHOSPHORYLATION AT SER-143; SER-215; THR-220; SER-305 AND SER-309</scope>
    <scope>DEPHOSPHORYLATION</scope>
    <scope>OXIDATION AT MET-146; MET-301 AND MET-552</scope>
    <scope>IDENTIFICATION BY MASS SPECTROMETRY</scope>
</reference>
<reference key="23">
    <citation type="journal article" date="2015" name="Proteomics">
        <title>N-terminome analysis of the human mitochondrial proteome.</title>
        <authorList>
            <person name="Vaca Jacome A.S."/>
            <person name="Rabilloud T."/>
            <person name="Schaeffer-Reiss C."/>
            <person name="Rompais M."/>
            <person name="Ayoub D."/>
            <person name="Lane L."/>
            <person name="Bairoch A."/>
            <person name="Van Dorsselaer A."/>
            <person name="Carapito C."/>
        </authorList>
    </citation>
    <scope>IDENTIFICATION BY MASS SPECTROMETRY [LARGE SCALE ANALYSIS]</scope>
</reference>
<reference key="24">
    <citation type="journal article" date="2017" name="Nat. Struct. Mol. Biol.">
        <title>Site-specific mapping of the human SUMO proteome reveals co-modification with phosphorylation.</title>
        <authorList>
            <person name="Hendriks I.A."/>
            <person name="Lyon D."/>
            <person name="Young C."/>
            <person name="Jensen L.J."/>
            <person name="Vertegaal A.C."/>
            <person name="Nielsen M.L."/>
        </authorList>
    </citation>
    <scope>SUMOYLATION [LARGE SCALE ANALYSIS] AT LYS-308</scope>
    <scope>IDENTIFICATION BY MASS SPECTROMETRY [LARGE SCALE ANALYSIS]</scope>
</reference>
<reference key="25">
    <citation type="journal article" date="2006" name="Science">
        <title>The consensus coding sequences of human breast and colorectal cancers.</title>
        <authorList>
            <person name="Sjoeblom T."/>
            <person name="Jones S."/>
            <person name="Wood L.D."/>
            <person name="Parsons D.W."/>
            <person name="Lin J."/>
            <person name="Barber T.D."/>
            <person name="Mandelker D."/>
            <person name="Leary R.J."/>
            <person name="Ptak J."/>
            <person name="Silliman N."/>
            <person name="Szabo S."/>
            <person name="Buckhaults P."/>
            <person name="Farrell C."/>
            <person name="Meeh P."/>
            <person name="Markowitz S.D."/>
            <person name="Willis J."/>
            <person name="Dawson D."/>
            <person name="Willson J.K.V."/>
            <person name="Gazdar A.F."/>
            <person name="Hartigan J."/>
            <person name="Wu L."/>
            <person name="Liu C."/>
            <person name="Parmigiani G."/>
            <person name="Park B.H."/>
            <person name="Bachman K.E."/>
            <person name="Papadopoulos N."/>
            <person name="Vogelstein B."/>
            <person name="Kinzler K.W."/>
            <person name="Velculescu V.E."/>
        </authorList>
    </citation>
    <scope>VARIANT [LARGE SCALE ANALYSIS] ILE-190</scope>
</reference>
<reference key="26">
    <citation type="journal article" date="2014" name="Neuromuscul. Disord.">
        <title>Mutation in TOR1AIP1 encoding LAP1B in a form of muscular dystrophy: a novel gene related to nuclear envelopathies.</title>
        <authorList>
            <person name="Kayman-Kurekci G."/>
            <person name="Talim B."/>
            <person name="Korkusuz P."/>
            <person name="Sayar N."/>
            <person name="Sarioglu T."/>
            <person name="Oncel I."/>
            <person name="Sharafi P."/>
            <person name="Gundesli H."/>
            <person name="Balci-Hayta B."/>
            <person name="Purali N."/>
            <person name="Serdaroglu-Oflazer P."/>
            <person name="Topaloglu H."/>
            <person name="Dincer P."/>
        </authorList>
    </citation>
    <scope>INVOLVEMENT IN MRRSDC</scope>
    <scope>TISSUE SPECIFICITY</scope>
</reference>
<feature type="chain" id="PRO_0000228835" description="Torsin-1A-interacting protein 1">
    <location>
        <begin position="1"/>
        <end position="583"/>
    </location>
</feature>
<feature type="topological domain" description="Nuclear" evidence="3">
    <location>
        <begin position="1"/>
        <end position="338"/>
    </location>
</feature>
<feature type="transmembrane region" description="Helical" evidence="3">
    <location>
        <begin position="339"/>
        <end position="355"/>
    </location>
</feature>
<feature type="topological domain" description="Perinuclear space" evidence="3">
    <location>
        <begin position="356"/>
        <end position="583"/>
    </location>
</feature>
<feature type="region of interest" description="Disordered" evidence="4">
    <location>
        <begin position="1"/>
        <end position="254"/>
    </location>
</feature>
<feature type="region of interest" description="Disordered" evidence="4">
    <location>
        <begin position="271"/>
        <end position="293"/>
    </location>
</feature>
<feature type="region of interest" description="Disordered" evidence="4">
    <location>
        <begin position="309"/>
        <end position="328"/>
    </location>
</feature>
<feature type="region of interest" description="Interaction with TOR1A">
    <location>
        <begin position="356"/>
        <end position="583"/>
    </location>
</feature>
<feature type="coiled-coil region" evidence="3">
    <location>
        <begin position="359"/>
        <end position="435"/>
    </location>
</feature>
<feature type="compositionally biased region" description="Basic and acidic residues" evidence="4">
    <location>
        <begin position="1"/>
        <end position="12"/>
    </location>
</feature>
<feature type="compositionally biased region" description="Basic and acidic residues" evidence="4">
    <location>
        <begin position="74"/>
        <end position="101"/>
    </location>
</feature>
<feature type="compositionally biased region" description="Basic and acidic residues" evidence="4">
    <location>
        <begin position="115"/>
        <end position="124"/>
    </location>
</feature>
<feature type="compositionally biased region" description="Polar residues" evidence="4">
    <location>
        <begin position="165"/>
        <end position="174"/>
    </location>
</feature>
<feature type="compositionally biased region" description="Acidic residues" evidence="4">
    <location>
        <begin position="216"/>
        <end position="225"/>
    </location>
</feature>
<feature type="compositionally biased region" description="Basic and acidic residues" evidence="4">
    <location>
        <begin position="238"/>
        <end position="250"/>
    </location>
</feature>
<feature type="compositionally biased region" description="Polar residues" evidence="4">
    <location>
        <begin position="277"/>
        <end position="287"/>
    </location>
</feature>
<feature type="modified residue" description="Phosphoserine" evidence="2">
    <location>
        <position position="60"/>
    </location>
</feature>
<feature type="modified residue" description="Phosphoserine" evidence="20">
    <location>
        <position position="135"/>
    </location>
</feature>
<feature type="modified residue" description="Phosphoserine" evidence="15 19 20 22 23 24 25">
    <location>
        <position position="143"/>
    </location>
</feature>
<feature type="modified residue" description="Methionine sulfoxide" evidence="15">
    <location>
        <position position="146"/>
    </location>
</feature>
<feature type="modified residue" description="Phosphoserine" evidence="20 21 24 25">
    <location>
        <position position="154"/>
    </location>
</feature>
<feature type="modified residue" description="Phosphoserine" evidence="20 21 24 25">
    <location>
        <position position="156"/>
    </location>
</feature>
<feature type="modified residue" description="Phosphoserine" evidence="20 21 24 25">
    <location>
        <position position="157"/>
    </location>
</feature>
<feature type="modified residue" description="Phosphoserine" evidence="20 24">
    <location>
        <position position="186"/>
    </location>
</feature>
<feature type="modified residue" description="Phosphoserine" evidence="15 20 24 25">
    <location>
        <position position="215"/>
    </location>
</feature>
<feature type="modified residue" description="Phosphothreonine" evidence="15 19 20 21 22 24 25">
    <location>
        <position position="220"/>
    </location>
</feature>
<feature type="modified residue" description="Phosphoserine" evidence="21">
    <location>
        <position position="227"/>
    </location>
</feature>
<feature type="modified residue" description="Phosphoserine" evidence="1">
    <location>
        <position position="230"/>
    </location>
</feature>
<feature type="modified residue" description="Phosphoserine" evidence="1">
    <location>
        <position position="242"/>
    </location>
</feature>
<feature type="modified residue" description="Methionine sulfoxide" evidence="15">
    <location>
        <position position="301"/>
    </location>
</feature>
<feature type="modified residue" description="Phosphoserine" evidence="15 20 21">
    <location>
        <position position="305"/>
    </location>
</feature>
<feature type="modified residue" description="Phosphoserine" evidence="15">
    <location>
        <position position="309"/>
    </location>
</feature>
<feature type="modified residue" description="Phosphoserine" evidence="20 22 24">
    <location>
        <position position="315"/>
    </location>
</feature>
<feature type="modified residue" description="Methionine sulfoxide" evidence="15">
    <location>
        <position position="552"/>
    </location>
</feature>
<feature type="glycosylation site" description="N-linked (GlcNAc...) asparagine" evidence="11">
    <location>
        <position position="399"/>
    </location>
</feature>
<feature type="cross-link" description="Glycyl lysine isopeptide (Lys-Gly) (interchain with G-Cter in SUMO2)" evidence="26">
    <location>
        <position position="308"/>
    </location>
</feature>
<feature type="splice variant" id="VSP_061934" description="In isoform 4." evidence="15">
    <location>
        <begin position="1"/>
        <end position="121"/>
    </location>
</feature>
<feature type="splice variant" id="VSP_055704" description="In isoform 2 and isoform 3." evidence="16">
    <original>P</original>
    <variation>PA</variation>
    <location>
        <position position="184"/>
    </location>
</feature>
<feature type="splice variant" id="VSP_055705" description="In isoform 2." evidence="16">
    <location>
        <begin position="283"/>
        <end position="487"/>
    </location>
</feature>
<feature type="sequence variant" id="VAR_025717" description="In dbSNP:rs1281378." evidence="6 7 22 23">
    <original>M</original>
    <variation>T</variation>
    <location>
        <position position="146"/>
    </location>
</feature>
<feature type="sequence variant" id="VAR_035818" description="In a breast cancer sample; somatic mutation; dbSNP:rs775134055." evidence="10">
    <original>V</original>
    <variation>I</variation>
    <location>
        <position position="190"/>
    </location>
</feature>
<feature type="sequence variant" id="VAR_025718" description="In dbSNP:rs609521." evidence="6 7">
    <original>P</original>
    <variation>R</variation>
    <location>
        <position position="276"/>
    </location>
</feature>
<feature type="sequence variant" id="VAR_034566" description="In dbSNP:rs17279712.">
    <original>Q</original>
    <variation>H</variation>
    <location>
        <position position="293"/>
    </location>
</feature>
<feature type="sequence conflict" description="In Ref. 1; BAB13855." evidence="18" ref="1">
    <original>D</original>
    <variation>V</variation>
    <location>
        <position position="160"/>
    </location>
</feature>
<feature type="sequence conflict" description="In Ref. 1; BAB14461." evidence="18" ref="1">
    <original>Y</original>
    <variation>C</variation>
    <location>
        <position position="200"/>
    </location>
</feature>
<feature type="helix" evidence="27">
    <location>
        <begin position="363"/>
        <end position="378"/>
    </location>
</feature>
<feature type="helix" evidence="27">
    <location>
        <begin position="384"/>
        <end position="398"/>
    </location>
</feature>
<feature type="strand" evidence="27">
    <location>
        <begin position="408"/>
        <end position="414"/>
    </location>
</feature>
<feature type="helix" evidence="27">
    <location>
        <begin position="416"/>
        <end position="418"/>
    </location>
</feature>
<feature type="helix" evidence="27">
    <location>
        <begin position="419"/>
        <end position="434"/>
    </location>
</feature>
<feature type="helix" evidence="27">
    <location>
        <begin position="435"/>
        <end position="437"/>
    </location>
</feature>
<feature type="strand" evidence="27">
    <location>
        <begin position="442"/>
        <end position="445"/>
    </location>
</feature>
<feature type="helix" evidence="27">
    <location>
        <begin position="446"/>
        <end position="448"/>
    </location>
</feature>
<feature type="turn" evidence="27">
    <location>
        <begin position="449"/>
        <end position="451"/>
    </location>
</feature>
<feature type="helix" evidence="27">
    <location>
        <begin position="454"/>
        <end position="470"/>
    </location>
</feature>
<feature type="strand" evidence="27">
    <location>
        <begin position="475"/>
        <end position="479"/>
    </location>
</feature>
<feature type="helix" evidence="27">
    <location>
        <begin position="481"/>
        <end position="483"/>
    </location>
</feature>
<feature type="helix" evidence="27">
    <location>
        <begin position="486"/>
        <end position="490"/>
    </location>
</feature>
<feature type="helix" evidence="27">
    <location>
        <begin position="491"/>
        <end position="496"/>
    </location>
</feature>
<feature type="turn" evidence="27">
    <location>
        <begin position="498"/>
        <end position="500"/>
    </location>
</feature>
<feature type="strand" evidence="27">
    <location>
        <begin position="507"/>
        <end position="513"/>
    </location>
</feature>
<feature type="strand" evidence="27">
    <location>
        <begin position="515"/>
        <end position="517"/>
    </location>
</feature>
<feature type="helix" evidence="27">
    <location>
        <begin position="525"/>
        <end position="542"/>
    </location>
</feature>
<feature type="strand" evidence="27">
    <location>
        <begin position="548"/>
        <end position="550"/>
    </location>
</feature>
<feature type="helix" evidence="27">
    <location>
        <begin position="554"/>
        <end position="564"/>
    </location>
</feature>
<feature type="strand" evidence="27">
    <location>
        <begin position="566"/>
        <end position="570"/>
    </location>
</feature>
<feature type="helix" evidence="27">
    <location>
        <begin position="575"/>
        <end position="577"/>
    </location>
</feature>
<organism>
    <name type="scientific">Homo sapiens</name>
    <name type="common">Human</name>
    <dbReference type="NCBI Taxonomy" id="9606"/>
    <lineage>
        <taxon>Eukaryota</taxon>
        <taxon>Metazoa</taxon>
        <taxon>Chordata</taxon>
        <taxon>Craniata</taxon>
        <taxon>Vertebrata</taxon>
        <taxon>Euteleostomi</taxon>
        <taxon>Mammalia</taxon>
        <taxon>Eutheria</taxon>
        <taxon>Euarchontoglires</taxon>
        <taxon>Primates</taxon>
        <taxon>Haplorrhini</taxon>
        <taxon>Catarrhini</taxon>
        <taxon>Hominidae</taxon>
        <taxon>Homo</taxon>
    </lineage>
</organism>
<accession>Q5JTV8</accession>
<accession>A0A0A0MSK5</accession>
<accession>A8K630</accession>
<accession>B0QZ57</accession>
<accession>Q5JTV6</accession>
<accession>Q8IZ65</accession>
<accession>Q9H8Y6</accession>
<accession>Q9HAJ1</accession>
<accession>Q9NV52</accession>
<accession>Q9Y3X5</accession>
<evidence type="ECO:0000250" key="1">
    <source>
        <dbReference type="UniProtKB" id="Q5PQX1"/>
    </source>
</evidence>
<evidence type="ECO:0000250" key="2">
    <source>
        <dbReference type="UniProtKB" id="Q921T2"/>
    </source>
</evidence>
<evidence type="ECO:0000255" key="3"/>
<evidence type="ECO:0000256" key="4">
    <source>
        <dbReference type="SAM" id="MobiDB-lite"/>
    </source>
</evidence>
<evidence type="ECO:0000269" key="5">
    <source>
    </source>
</evidence>
<evidence type="ECO:0000269" key="6">
    <source>
    </source>
</evidence>
<evidence type="ECO:0000269" key="7">
    <source>
    </source>
</evidence>
<evidence type="ECO:0000269" key="8">
    <source>
    </source>
</evidence>
<evidence type="ECO:0000269" key="9">
    <source>
    </source>
</evidence>
<evidence type="ECO:0000269" key="10">
    <source>
    </source>
</evidence>
<evidence type="ECO:0000269" key="11">
    <source>
    </source>
</evidence>
<evidence type="ECO:0000269" key="12">
    <source>
    </source>
</evidence>
<evidence type="ECO:0000269" key="13">
    <source>
    </source>
</evidence>
<evidence type="ECO:0000269" key="14">
    <source>
    </source>
</evidence>
<evidence type="ECO:0000269" key="15">
    <source>
    </source>
</evidence>
<evidence type="ECO:0000303" key="16">
    <source>
    </source>
</evidence>
<evidence type="ECO:0000303" key="17">
    <source>
    </source>
</evidence>
<evidence type="ECO:0000305" key="18"/>
<evidence type="ECO:0007744" key="19">
    <source>
    </source>
</evidence>
<evidence type="ECO:0007744" key="20">
    <source>
    </source>
</evidence>
<evidence type="ECO:0007744" key="21">
    <source>
    </source>
</evidence>
<evidence type="ECO:0007744" key="22">
    <source>
    </source>
</evidence>
<evidence type="ECO:0007744" key="23">
    <source>
    </source>
</evidence>
<evidence type="ECO:0007744" key="24">
    <source>
    </source>
</evidence>
<evidence type="ECO:0007744" key="25">
    <source>
    </source>
</evidence>
<evidence type="ECO:0007744" key="26">
    <source>
    </source>
</evidence>
<evidence type="ECO:0007829" key="27">
    <source>
        <dbReference type="PDB" id="4TVS"/>
    </source>
</evidence>
<protein>
    <recommendedName>
        <fullName>Torsin-1A-interacting protein 1</fullName>
    </recommendedName>
    <alternativeName>
        <fullName>Lamin-associated protein 1B</fullName>
        <shortName>LAP1B</shortName>
    </alternativeName>
</protein>
<keyword id="KW-0002">3D-structure</keyword>
<keyword id="KW-0877">Alternative promoter usage</keyword>
<keyword id="KW-0025">Alternative splicing</keyword>
<keyword id="KW-0175">Coiled coil</keyword>
<keyword id="KW-0325">Glycoprotein</keyword>
<keyword id="KW-1017">Isopeptide bond</keyword>
<keyword id="KW-0947">Limb-girdle muscular dystrophy</keyword>
<keyword id="KW-0472">Membrane</keyword>
<keyword id="KW-0539">Nucleus</keyword>
<keyword id="KW-0558">Oxidation</keyword>
<keyword id="KW-0597">Phosphoprotein</keyword>
<keyword id="KW-1267">Proteomics identification</keyword>
<keyword id="KW-1185">Reference proteome</keyword>
<keyword id="KW-0812">Transmembrane</keyword>
<keyword id="KW-1133">Transmembrane helix</keyword>
<keyword id="KW-0832">Ubl conjugation</keyword>
<comment type="function">
    <text evidence="12">Required for nuclear membrane integrity. Induces TOR1A and TOR1B ATPase activity and is required for their location on the nuclear membrane. Binds to A- and B-type lamins. Possible role in membrane attachment and assembly of the nuclear lamina.</text>
</comment>
<comment type="subunit">
    <text evidence="8 9 12">Interacts with ATP1B4. Interacts with TOR1A (ATP-bound). Interacts with TOR1B, TOR2A and TOR3A. Interacts with VIM.</text>
</comment>
<comment type="interaction">
    <interactant intactId="EBI-2559665">
        <id>Q5JTV8</id>
    </interactant>
    <interactant intactId="EBI-25838028">
        <id>Q8N302-2</id>
        <label>AGGF1</label>
    </interactant>
    <organismsDiffer>false</organismsDiffer>
    <experiments>3</experiments>
</comment>
<comment type="interaction">
    <interactant intactId="EBI-2559665">
        <id>Q5JTV8</id>
    </interactant>
    <interactant intactId="EBI-10693038">
        <id>Q9NSI6-4</id>
        <label>BRWD1</label>
    </interactant>
    <organismsDiffer>false</organismsDiffer>
    <experiments>3</experiments>
</comment>
<comment type="interaction">
    <interactant intactId="EBI-2559665">
        <id>Q5JTV8</id>
    </interactant>
    <interactant intactId="EBI-357253">
        <id>P62136</id>
        <label>PPP1CA</label>
    </interactant>
    <organismsDiffer>false</organismsDiffer>
    <experiments>2</experiments>
</comment>
<comment type="interaction">
    <interactant intactId="EBI-2559665">
        <id>Q5JTV8</id>
    </interactant>
    <interactant intactId="EBI-712149">
        <id>Q06323</id>
        <label>PSME1</label>
    </interactant>
    <organismsDiffer>false</organismsDiffer>
    <experiments>3</experiments>
</comment>
<comment type="interaction">
    <interactant intactId="EBI-2559665">
        <id>Q5JTV8</id>
    </interactant>
    <interactant intactId="EBI-632715">
        <id>Q13573</id>
        <label>SNW1</label>
    </interactant>
    <organismsDiffer>false</organismsDiffer>
    <experiments>3</experiments>
</comment>
<comment type="interaction">
    <interactant intactId="EBI-2559665">
        <id>Q5JTV8</id>
    </interactant>
    <interactant intactId="EBI-3923692">
        <id>Q496A3</id>
        <label>SPATS1</label>
    </interactant>
    <organismsDiffer>false</organismsDiffer>
    <experiments>3</experiments>
</comment>
<comment type="interaction">
    <interactant intactId="EBI-2559665">
        <id>Q5JTV8</id>
    </interactant>
    <interactant intactId="EBI-750109">
        <id>Q9NYB0</id>
        <label>TERF2IP</label>
    </interactant>
    <organismsDiffer>false</organismsDiffer>
    <experiments>2</experiments>
</comment>
<comment type="interaction">
    <interactant intactId="EBI-2559665">
        <id>Q5JTV8</id>
    </interactant>
    <interactant intactId="EBI-524257">
        <id>O14656</id>
        <label>TOR1A</label>
    </interactant>
    <organismsDiffer>false</organismsDiffer>
    <experiments>2</experiments>
</comment>
<comment type="interaction">
    <interactant intactId="EBI-2559665">
        <id>Q5JTV8</id>
    </interactant>
    <interactant intactId="EBI-8834821">
        <id>Q8WUU4</id>
        <label>ZNF296</label>
    </interactant>
    <organismsDiffer>false</organismsDiffer>
    <experiments>3</experiments>
</comment>
<comment type="interaction">
    <interactant intactId="EBI-21448143">
        <id>Q5JTV8-3</id>
    </interactant>
    <interactant intactId="EBI-356289">
        <id>P36873-1</id>
        <label>PPP1CC</label>
    </interactant>
    <organismsDiffer>false</organismsDiffer>
    <experiments>4</experiments>
</comment>
<comment type="subcellular location">
    <subcellularLocation>
        <location evidence="5 13">Nucleus inner membrane</location>
        <topology evidence="5 13">Single-pass membrane protein</topology>
    </subcellularLocation>
</comment>
<comment type="subcellular location">
    <molecule>Isoform 4</molecule>
    <subcellularLocation>
        <location evidence="15">Nucleus envelope</location>
    </subcellularLocation>
    <subcellularLocation>
        <location evidence="15">Nucleus</location>
    </subcellularLocation>
    <text evidence="15">Found mainly in the nuclear envelope and also inside the nucleus.</text>
</comment>
<comment type="alternative products">
    <event type="alternative promoter"/>
    <event type="alternative splicing"/>
    <isoform>
        <id>Q5JTV8-1</id>
        <name>1</name>
        <name evidence="17">LAP1B</name>
        <sequence type="displayed"/>
    </isoform>
    <isoform>
        <id>Q5JTV8-2</id>
        <name>2</name>
        <sequence type="described" ref="VSP_055704 VSP_055705"/>
    </isoform>
    <isoform>
        <id>Q5JTV8-3</id>
        <name>3</name>
        <sequence type="described" ref="VSP_055704"/>
    </isoform>
    <isoform>
        <id>Q5JTV8-4</id>
        <name>4</name>
        <name evidence="17">LAP1C</name>
        <sequence type="described" ref="VSP_061934"/>
    </isoform>
</comment>
<comment type="tissue specificity">
    <text evidence="14">Expressed in muscle, liver and kidney.</text>
</comment>
<comment type="tissue specificity">
    <molecule>Isoform 1</molecule>
    <text evidence="15">Major isoform present in liver, brain and heart (at protein level). Expressed at lower levels than isoform 4 in lung, kidney and spleen (at protein level). Similar levels of isoforms 1 and 4 are observed in ovary, testis and pancreas (at protein level).</text>
</comment>
<comment type="tissue specificity">
    <molecule>Isoform 4</molecule>
    <text evidence="15">Expressed at higher levels than isoform 1 in lung, kidney and spleen (at protein level). Expressed at lower levels than isoform 1 in liver, brain and heart (at protein level). Similar levels of isoforms 1 and 4 are observed in ovary, testis and pancreas (at protein level).</text>
</comment>
<comment type="developmental stage">
    <molecule>Isoform 1</molecule>
    <text evidence="15">Expression increases during neuronal development (at protein level).</text>
</comment>
<comment type="developmental stage">
    <molecule>Isoform 4</molecule>
    <text evidence="15">Expression increases during neuronal development (at protein level).</text>
</comment>
<comment type="PTM">
    <text evidence="15">Phosphorylated. Dephosphorylated at Ser-309 and Ser-315 by serine/threonine-protein phosphatase PP1.</text>
</comment>
<comment type="disease" evidence="14">
    <disease id="DI-04804">
        <name>Myopathy, autosomal recessive, with rigid spine and distal joint contractures</name>
        <acronym>MRRSDC</acronym>
        <description>An autosomal recessive degenerative myopathy characterized by muscle weakness initially involving the proximal lower limbs, followed by distal upper and lower limb muscle weakness and atrophy. Other features include joint contractures, rigid spine, and restricted pulmonary function. Cardiac involvement has been observed in some patients. Disease onset is in the first or second decades of life.</description>
        <dbReference type="MIM" id="617072"/>
    </disease>
    <text>The disease is caused by variants affecting the gene represented in this entry.</text>
</comment>
<comment type="miscellaneous">
    <molecule>Isoform 4</molecule>
    <text evidence="15">Produced by alternative promoter usage.</text>
</comment>
<comment type="similarity">
    <text evidence="18">Belongs to the TOR1AIP family.</text>
</comment>
<gene>
    <name type="primary">TOR1AIP1</name>
    <name type="synonym">LAP1</name>
</gene>
<dbReference type="EMBL" id="AK001780">
    <property type="protein sequence ID" value="BAA91906.1"/>
    <property type="molecule type" value="mRNA"/>
</dbReference>
<dbReference type="EMBL" id="AK021613">
    <property type="protein sequence ID" value="BAB13855.1"/>
    <property type="molecule type" value="mRNA"/>
</dbReference>
<dbReference type="EMBL" id="AK023204">
    <property type="protein sequence ID" value="BAB14461.1"/>
    <property type="molecule type" value="mRNA"/>
</dbReference>
<dbReference type="EMBL" id="AK291495">
    <property type="protein sequence ID" value="BAF84184.1"/>
    <property type="molecule type" value="mRNA"/>
</dbReference>
<dbReference type="EMBL" id="AL353708">
    <property type="status" value="NOT_ANNOTATED_CDS"/>
    <property type="molecule type" value="Genomic_DNA"/>
</dbReference>
<dbReference type="EMBL" id="BC023247">
    <property type="protein sequence ID" value="AAH23247.1"/>
    <property type="molecule type" value="mRNA"/>
</dbReference>
<dbReference type="EMBL" id="AL050126">
    <property type="protein sequence ID" value="CAB43282.1"/>
    <property type="molecule type" value="mRNA"/>
</dbReference>
<dbReference type="CCDS" id="CCDS1335.1">
    <molecule id="Q5JTV8-1"/>
</dbReference>
<dbReference type="CCDS" id="CCDS65737.1">
    <molecule id="Q5JTV8-3"/>
</dbReference>
<dbReference type="PIR" id="T08767">
    <property type="entry name" value="T08767"/>
</dbReference>
<dbReference type="RefSeq" id="NP_001254507.1">
    <molecule id="Q5JTV8-3"/>
    <property type="nucleotide sequence ID" value="NM_001267578.2"/>
</dbReference>
<dbReference type="RefSeq" id="NP_056417.2">
    <molecule id="Q5JTV8-1"/>
    <property type="nucleotide sequence ID" value="NM_015602.3"/>
</dbReference>
<dbReference type="PDB" id="4TVS">
    <property type="method" value="X-ray"/>
    <property type="resolution" value="1.60 A"/>
    <property type="chains" value="A/B=356-583"/>
</dbReference>
<dbReference type="PDBsum" id="4TVS"/>
<dbReference type="SMR" id="Q5JTV8"/>
<dbReference type="BioGRID" id="117543">
    <property type="interactions" value="265"/>
</dbReference>
<dbReference type="CORUM" id="Q5JTV8"/>
<dbReference type="DIP" id="DIP-56692N"/>
<dbReference type="FunCoup" id="Q5JTV8">
    <property type="interactions" value="1955"/>
</dbReference>
<dbReference type="IntAct" id="Q5JTV8">
    <property type="interactions" value="107"/>
</dbReference>
<dbReference type="MINT" id="Q5JTV8"/>
<dbReference type="STRING" id="9606.ENSP00000435365"/>
<dbReference type="GlyConnect" id="1822">
    <property type="glycosylation" value="3 N-Linked glycans (1 site)"/>
</dbReference>
<dbReference type="GlyCosmos" id="Q5JTV8">
    <property type="glycosylation" value="3 sites, 4 glycans"/>
</dbReference>
<dbReference type="GlyGen" id="Q5JTV8">
    <property type="glycosylation" value="9 sites, 9 N-linked glycans (2 sites), 1 O-linked glycan (5 sites)"/>
</dbReference>
<dbReference type="iPTMnet" id="Q5JTV8"/>
<dbReference type="MetOSite" id="Q5JTV8"/>
<dbReference type="PhosphoSitePlus" id="Q5JTV8"/>
<dbReference type="SwissPalm" id="Q5JTV8"/>
<dbReference type="BioMuta" id="TOR1AIP1"/>
<dbReference type="DMDM" id="90101788"/>
<dbReference type="jPOST" id="Q5JTV8"/>
<dbReference type="MassIVE" id="Q5JTV8"/>
<dbReference type="PaxDb" id="9606-ENSP00000435365"/>
<dbReference type="PeptideAtlas" id="Q5JTV8"/>
<dbReference type="ProteomicsDB" id="63233">
    <molecule id="Q5JTV8-1"/>
</dbReference>
<dbReference type="ProteomicsDB" id="63234">
    <molecule id="Q5JTV8-2"/>
</dbReference>
<dbReference type="Pumba" id="Q5JTV8"/>
<dbReference type="ABCD" id="Q5JTV8">
    <property type="antibodies" value="1 sequenced antibody"/>
</dbReference>
<dbReference type="Antibodypedia" id="34423">
    <property type="antibodies" value="114 antibodies from 27 providers"/>
</dbReference>
<dbReference type="DNASU" id="26092"/>
<dbReference type="Ensembl" id="ENST00000435319.8">
    <molecule id="Q5JTV8-4"/>
    <property type="protein sequence ID" value="ENSP00000393292.3"/>
    <property type="gene ID" value="ENSG00000143337.19"/>
</dbReference>
<dbReference type="Ensembl" id="ENST00000528443.6">
    <molecule id="Q5JTV8-3"/>
    <property type="protein sequence ID" value="ENSP00000435365.2"/>
    <property type="gene ID" value="ENSG00000143337.19"/>
</dbReference>
<dbReference type="Ensembl" id="ENST00000606911.7">
    <molecule id="Q5JTV8-1"/>
    <property type="protein sequence ID" value="ENSP00000476687.1"/>
    <property type="gene ID" value="ENSG00000143337.19"/>
</dbReference>
<dbReference type="GeneID" id="26092"/>
<dbReference type="KEGG" id="hsa:26092"/>
<dbReference type="MANE-Select" id="ENST00000606911.7">
    <property type="protein sequence ID" value="ENSP00000476687.1"/>
    <property type="RefSeq nucleotide sequence ID" value="NM_015602.4"/>
    <property type="RefSeq protein sequence ID" value="NP_056417.2"/>
</dbReference>
<dbReference type="UCSC" id="uc001gnp.3">
    <molecule id="Q5JTV8-1"/>
    <property type="organism name" value="human"/>
</dbReference>
<dbReference type="AGR" id="HGNC:29456"/>
<dbReference type="CTD" id="26092"/>
<dbReference type="DisGeNET" id="26092"/>
<dbReference type="GeneCards" id="TOR1AIP1"/>
<dbReference type="HGNC" id="HGNC:29456">
    <property type="gene designation" value="TOR1AIP1"/>
</dbReference>
<dbReference type="HPA" id="ENSG00000143337">
    <property type="expression patterns" value="Low tissue specificity"/>
</dbReference>
<dbReference type="MalaCards" id="TOR1AIP1"/>
<dbReference type="MIM" id="614512">
    <property type="type" value="gene"/>
</dbReference>
<dbReference type="MIM" id="617072">
    <property type="type" value="phenotype"/>
</dbReference>
<dbReference type="neXtProt" id="NX_Q5JTV8"/>
<dbReference type="OpenTargets" id="ENSG00000143337"/>
<dbReference type="Orphanet" id="424261">
    <property type="disease" value="TOR1AIP1-related limb-girdle muscular dystrophy"/>
</dbReference>
<dbReference type="PharmGKB" id="PA142670715"/>
<dbReference type="VEuPathDB" id="HostDB:ENSG00000143337"/>
<dbReference type="eggNOG" id="ENOG502QUV7">
    <property type="taxonomic scope" value="Eukaryota"/>
</dbReference>
<dbReference type="GeneTree" id="ENSGT00390000012166"/>
<dbReference type="HOGENOM" id="CLU_034263_0_1_1"/>
<dbReference type="InParanoid" id="Q5JTV8"/>
<dbReference type="OMA" id="NASFVKM"/>
<dbReference type="OrthoDB" id="6258998at2759"/>
<dbReference type="PAN-GO" id="Q5JTV8">
    <property type="GO annotations" value="2 GO annotations based on evolutionary models"/>
</dbReference>
<dbReference type="PhylomeDB" id="Q5JTV8"/>
<dbReference type="TreeFam" id="TF329438"/>
<dbReference type="PathwayCommons" id="Q5JTV8"/>
<dbReference type="Reactome" id="R-HSA-9013405">
    <property type="pathway name" value="RHOD GTPase cycle"/>
</dbReference>
<dbReference type="Reactome" id="R-HSA-9035034">
    <property type="pathway name" value="RHOF GTPase cycle"/>
</dbReference>
<dbReference type="SignaLink" id="Q5JTV8"/>
<dbReference type="SIGNOR" id="Q5JTV8"/>
<dbReference type="BioGRID-ORCS" id="26092">
    <property type="hits" value="34 hits in 1186 CRISPR screens"/>
</dbReference>
<dbReference type="ChiTaRS" id="TOR1AIP1">
    <property type="organism name" value="human"/>
</dbReference>
<dbReference type="EvolutionaryTrace" id="Q5JTV8"/>
<dbReference type="GeneWiki" id="TOR1AIP1"/>
<dbReference type="GenomeRNAi" id="26092"/>
<dbReference type="Pharos" id="Q5JTV8">
    <property type="development level" value="Tbio"/>
</dbReference>
<dbReference type="PRO" id="PR:Q5JTV8"/>
<dbReference type="Proteomes" id="UP000005640">
    <property type="component" value="Chromosome 1"/>
</dbReference>
<dbReference type="RNAct" id="Q5JTV8">
    <property type="molecule type" value="protein"/>
</dbReference>
<dbReference type="Bgee" id="ENSG00000143337">
    <property type="expression patterns" value="Expressed in choroid plexus epithelium and 217 other cell types or tissues"/>
</dbReference>
<dbReference type="ExpressionAtlas" id="Q5JTV8">
    <property type="expression patterns" value="baseline and differential"/>
</dbReference>
<dbReference type="GO" id="GO:0005635">
    <property type="term" value="C:nuclear envelope"/>
    <property type="evidence" value="ECO:0000314"/>
    <property type="project" value="UniProtKB"/>
</dbReference>
<dbReference type="GO" id="GO:0005637">
    <property type="term" value="C:nuclear inner membrane"/>
    <property type="evidence" value="ECO:0007669"/>
    <property type="project" value="UniProtKB-SubCell"/>
</dbReference>
<dbReference type="GO" id="GO:0031965">
    <property type="term" value="C:nuclear membrane"/>
    <property type="evidence" value="ECO:0000314"/>
    <property type="project" value="HPA"/>
</dbReference>
<dbReference type="GO" id="GO:0005654">
    <property type="term" value="C:nucleoplasm"/>
    <property type="evidence" value="ECO:0000314"/>
    <property type="project" value="HPA"/>
</dbReference>
<dbReference type="GO" id="GO:0005634">
    <property type="term" value="C:nucleus"/>
    <property type="evidence" value="ECO:0000314"/>
    <property type="project" value="UniProtKB"/>
</dbReference>
<dbReference type="GO" id="GO:0001671">
    <property type="term" value="F:ATPase activator activity"/>
    <property type="evidence" value="ECO:0000314"/>
    <property type="project" value="UniProtKB"/>
</dbReference>
<dbReference type="GO" id="GO:0051117">
    <property type="term" value="F:ATPase binding"/>
    <property type="evidence" value="ECO:0000353"/>
    <property type="project" value="UniProtKB"/>
</dbReference>
<dbReference type="GO" id="GO:0008092">
    <property type="term" value="F:cytoskeletal protein binding"/>
    <property type="evidence" value="ECO:0000353"/>
    <property type="project" value="UniProtKB"/>
</dbReference>
<dbReference type="GO" id="GO:0005521">
    <property type="term" value="F:lamin binding"/>
    <property type="evidence" value="ECO:0007669"/>
    <property type="project" value="Ensembl"/>
</dbReference>
<dbReference type="GO" id="GO:0071763">
    <property type="term" value="P:nuclear membrane organization"/>
    <property type="evidence" value="ECO:0000318"/>
    <property type="project" value="GO_Central"/>
</dbReference>
<dbReference type="GO" id="GO:0032781">
    <property type="term" value="P:positive regulation of ATP-dependent activity"/>
    <property type="evidence" value="ECO:0000314"/>
    <property type="project" value="UniProtKB"/>
</dbReference>
<dbReference type="GO" id="GO:0090435">
    <property type="term" value="P:protein localization to nuclear envelope"/>
    <property type="evidence" value="ECO:0007669"/>
    <property type="project" value="Ensembl"/>
</dbReference>
<dbReference type="GO" id="GO:0034504">
    <property type="term" value="P:protein localization to nucleus"/>
    <property type="evidence" value="ECO:0000250"/>
    <property type="project" value="UniProtKB"/>
</dbReference>
<dbReference type="FunFam" id="3.40.50.12190:FF:000001">
    <property type="entry name" value="torsin-1A-interacting protein 1 isoform X1"/>
    <property type="match status" value="1"/>
</dbReference>
<dbReference type="Gene3D" id="3.40.50.12190">
    <property type="match status" value="1"/>
</dbReference>
<dbReference type="InterPro" id="IPR038599">
    <property type="entry name" value="LAP1C-like_C_sf"/>
</dbReference>
<dbReference type="InterPro" id="IPR008662">
    <property type="entry name" value="TOIP1/2"/>
</dbReference>
<dbReference type="InterPro" id="IPR046753">
    <property type="entry name" value="TOIP1/2_C"/>
</dbReference>
<dbReference type="InterPro" id="IPR046754">
    <property type="entry name" value="TOIP1/2_N"/>
</dbReference>
<dbReference type="PANTHER" id="PTHR18843">
    <property type="entry name" value="TORSIN-1A-INTERACTING PROTEIN"/>
    <property type="match status" value="1"/>
</dbReference>
<dbReference type="PANTHER" id="PTHR18843:SF6">
    <property type="entry name" value="TORSIN-1A-INTERACTING PROTEIN 1"/>
    <property type="match status" value="1"/>
</dbReference>
<dbReference type="Pfam" id="PF05609">
    <property type="entry name" value="LAP1_C"/>
    <property type="match status" value="1"/>
</dbReference>
<dbReference type="Pfam" id="PF20443">
    <property type="entry name" value="LAP1_N"/>
    <property type="match status" value="1"/>
</dbReference>